<evidence type="ECO:0000255" key="1">
    <source>
        <dbReference type="HAMAP-Rule" id="MF_00391"/>
    </source>
</evidence>
<evidence type="ECO:0000256" key="2">
    <source>
        <dbReference type="SAM" id="MobiDB-lite"/>
    </source>
</evidence>
<evidence type="ECO:0000305" key="3"/>
<proteinExistence type="inferred from homology"/>
<dbReference type="EMBL" id="CP000725">
    <property type="protein sequence ID" value="ABV09280.1"/>
    <property type="molecule type" value="Genomic_DNA"/>
</dbReference>
<dbReference type="RefSeq" id="WP_000831902.1">
    <property type="nucleotide sequence ID" value="NC_009785.1"/>
</dbReference>
<dbReference type="SMR" id="A8AUP4"/>
<dbReference type="STRING" id="467705.SGO_0183"/>
<dbReference type="GeneID" id="93788630"/>
<dbReference type="KEGG" id="sgo:SGO_0183"/>
<dbReference type="eggNOG" id="COG0230">
    <property type="taxonomic scope" value="Bacteria"/>
</dbReference>
<dbReference type="HOGENOM" id="CLU_129938_2_0_9"/>
<dbReference type="Proteomes" id="UP000001131">
    <property type="component" value="Chromosome"/>
</dbReference>
<dbReference type="GO" id="GO:1990904">
    <property type="term" value="C:ribonucleoprotein complex"/>
    <property type="evidence" value="ECO:0007669"/>
    <property type="project" value="UniProtKB-KW"/>
</dbReference>
<dbReference type="GO" id="GO:0005840">
    <property type="term" value="C:ribosome"/>
    <property type="evidence" value="ECO:0007669"/>
    <property type="project" value="UniProtKB-KW"/>
</dbReference>
<dbReference type="GO" id="GO:0003735">
    <property type="term" value="F:structural constituent of ribosome"/>
    <property type="evidence" value="ECO:0007669"/>
    <property type="project" value="InterPro"/>
</dbReference>
<dbReference type="GO" id="GO:0006412">
    <property type="term" value="P:translation"/>
    <property type="evidence" value="ECO:0007669"/>
    <property type="project" value="UniProtKB-UniRule"/>
</dbReference>
<dbReference type="FunFam" id="1.10.287.3980:FF:000001">
    <property type="entry name" value="Mitochondrial ribosomal protein L34"/>
    <property type="match status" value="1"/>
</dbReference>
<dbReference type="Gene3D" id="1.10.287.3980">
    <property type="match status" value="1"/>
</dbReference>
<dbReference type="HAMAP" id="MF_00391">
    <property type="entry name" value="Ribosomal_bL34"/>
    <property type="match status" value="1"/>
</dbReference>
<dbReference type="InterPro" id="IPR000271">
    <property type="entry name" value="Ribosomal_bL34"/>
</dbReference>
<dbReference type="InterPro" id="IPR020939">
    <property type="entry name" value="Ribosomal_bL34_CS"/>
</dbReference>
<dbReference type="NCBIfam" id="TIGR01030">
    <property type="entry name" value="rpmH_bact"/>
    <property type="match status" value="1"/>
</dbReference>
<dbReference type="PANTHER" id="PTHR14503:SF4">
    <property type="entry name" value="LARGE RIBOSOMAL SUBUNIT PROTEIN BL34M"/>
    <property type="match status" value="1"/>
</dbReference>
<dbReference type="PANTHER" id="PTHR14503">
    <property type="entry name" value="MITOCHONDRIAL RIBOSOMAL PROTEIN 34 FAMILY MEMBER"/>
    <property type="match status" value="1"/>
</dbReference>
<dbReference type="Pfam" id="PF00468">
    <property type="entry name" value="Ribosomal_L34"/>
    <property type="match status" value="1"/>
</dbReference>
<dbReference type="PROSITE" id="PS00784">
    <property type="entry name" value="RIBOSOMAL_L34"/>
    <property type="match status" value="1"/>
</dbReference>
<reference key="1">
    <citation type="journal article" date="2007" name="J. Bacteriol.">
        <title>Genome-wide transcriptional changes in Streptococcus gordonii in response to competence signaling peptide.</title>
        <authorList>
            <person name="Vickerman M.M."/>
            <person name="Iobst S."/>
            <person name="Jesionowski A.M."/>
            <person name="Gill S.R."/>
        </authorList>
    </citation>
    <scope>NUCLEOTIDE SEQUENCE [LARGE SCALE GENOMIC DNA]</scope>
    <source>
        <strain>Challis / ATCC 35105 / BCRC 15272 / CH1 / DL1 / V288</strain>
    </source>
</reference>
<organism>
    <name type="scientific">Streptococcus gordonii (strain Challis / ATCC 35105 / BCRC 15272 / CH1 / DL1 / V288)</name>
    <dbReference type="NCBI Taxonomy" id="467705"/>
    <lineage>
        <taxon>Bacteria</taxon>
        <taxon>Bacillati</taxon>
        <taxon>Bacillota</taxon>
        <taxon>Bacilli</taxon>
        <taxon>Lactobacillales</taxon>
        <taxon>Streptococcaceae</taxon>
        <taxon>Streptococcus</taxon>
    </lineage>
</organism>
<protein>
    <recommendedName>
        <fullName evidence="1">Large ribosomal subunit protein bL34</fullName>
    </recommendedName>
    <alternativeName>
        <fullName evidence="3">50S ribosomal protein L34</fullName>
    </alternativeName>
</protein>
<sequence length="44" mass="5265">MKRTYQPSKIRRARKHGFRNRMSTKNGRRVLAARRRKGRKVLAA</sequence>
<accession>A8AUP4</accession>
<keyword id="KW-1185">Reference proteome</keyword>
<keyword id="KW-0687">Ribonucleoprotein</keyword>
<keyword id="KW-0689">Ribosomal protein</keyword>
<comment type="similarity">
    <text evidence="1">Belongs to the bacterial ribosomal protein bL34 family.</text>
</comment>
<name>RL34_STRGC</name>
<gene>
    <name evidence="1" type="primary">rpmH</name>
    <name type="ordered locus">SGO_0183</name>
</gene>
<feature type="chain" id="PRO_1000080274" description="Large ribosomal subunit protein bL34">
    <location>
        <begin position="1"/>
        <end position="44"/>
    </location>
</feature>
<feature type="region of interest" description="Disordered" evidence="2">
    <location>
        <begin position="1"/>
        <end position="44"/>
    </location>
</feature>
<feature type="compositionally biased region" description="Basic residues" evidence="2">
    <location>
        <begin position="1"/>
        <end position="19"/>
    </location>
</feature>
<feature type="compositionally biased region" description="Basic residues" evidence="2">
    <location>
        <begin position="26"/>
        <end position="44"/>
    </location>
</feature>